<dbReference type="EC" id="1.14.11.67" evidence="9 10 11"/>
<dbReference type="EMBL" id="AE014134">
    <property type="protein sequence ID" value="AAF52319.1"/>
    <property type="molecule type" value="Genomic_DNA"/>
</dbReference>
<dbReference type="EMBL" id="AY095051">
    <property type="protein sequence ID" value="AAM11379.1"/>
    <property type="molecule type" value="mRNA"/>
</dbReference>
<dbReference type="EMBL" id="AE014134">
    <property type="protein sequence ID" value="AAN10569.1"/>
    <property type="molecule type" value="Genomic_DNA"/>
</dbReference>
<dbReference type="RefSeq" id="NP_001245908.1">
    <property type="nucleotide sequence ID" value="NM_001258979.2"/>
</dbReference>
<dbReference type="RefSeq" id="NP_001245909.1">
    <property type="nucleotide sequence ID" value="NM_001258980.1"/>
</dbReference>
<dbReference type="RefSeq" id="NP_001245910.1">
    <property type="nucleotide sequence ID" value="NM_001258981.2"/>
</dbReference>
<dbReference type="RefSeq" id="NP_001285649.1">
    <property type="nucleotide sequence ID" value="NM_001298720.1"/>
</dbReference>
<dbReference type="RefSeq" id="NP_523486.1">
    <property type="nucleotide sequence ID" value="NM_078762.6"/>
</dbReference>
<dbReference type="RefSeq" id="NP_723140.1">
    <property type="nucleotide sequence ID" value="NM_164671.1"/>
</dbReference>
<dbReference type="PDB" id="2LM1">
    <property type="method" value="NMR"/>
    <property type="chains" value="A=214-320"/>
</dbReference>
<dbReference type="PDB" id="2MIQ">
    <property type="method" value="NMR"/>
    <property type="chains" value="A=414-504"/>
</dbReference>
<dbReference type="PDBsum" id="2LM1"/>
<dbReference type="PDBsum" id="2MIQ"/>
<dbReference type="BMRB" id="Q9VMJ7"/>
<dbReference type="SMR" id="Q9VMJ7"/>
<dbReference type="BioGRID" id="60002">
    <property type="interactions" value="44"/>
</dbReference>
<dbReference type="DIP" id="DIP-29330N"/>
<dbReference type="FunCoup" id="Q9VMJ7">
    <property type="interactions" value="2181"/>
</dbReference>
<dbReference type="IntAct" id="Q9VMJ7">
    <property type="interactions" value="15"/>
</dbReference>
<dbReference type="MINT" id="Q9VMJ7"/>
<dbReference type="STRING" id="7227.FBpp0311492"/>
<dbReference type="GlyGen" id="Q9VMJ7">
    <property type="glycosylation" value="7 sites"/>
</dbReference>
<dbReference type="iPTMnet" id="Q9VMJ7"/>
<dbReference type="PaxDb" id="7227-FBpp0297914"/>
<dbReference type="DNASU" id="33837"/>
<dbReference type="EnsemblMetazoa" id="FBtr0079231">
    <property type="protein sequence ID" value="FBpp0078862"/>
    <property type="gene ID" value="FBgn0031759"/>
</dbReference>
<dbReference type="EnsemblMetazoa" id="FBtr0079232">
    <property type="protein sequence ID" value="FBpp0078863"/>
    <property type="gene ID" value="FBgn0031759"/>
</dbReference>
<dbReference type="EnsemblMetazoa" id="FBtr0307069">
    <property type="protein sequence ID" value="FBpp0297912"/>
    <property type="gene ID" value="FBgn0031759"/>
</dbReference>
<dbReference type="EnsemblMetazoa" id="FBtr0307070">
    <property type="protein sequence ID" value="FBpp0297913"/>
    <property type="gene ID" value="FBgn0031759"/>
</dbReference>
<dbReference type="EnsemblMetazoa" id="FBtr0307071">
    <property type="protein sequence ID" value="FBpp0297914"/>
    <property type="gene ID" value="FBgn0031759"/>
</dbReference>
<dbReference type="EnsemblMetazoa" id="FBtr0345336">
    <property type="protein sequence ID" value="FBpp0311492"/>
    <property type="gene ID" value="FBgn0031759"/>
</dbReference>
<dbReference type="GeneID" id="33837"/>
<dbReference type="KEGG" id="dme:Dmel_CG9088"/>
<dbReference type="AGR" id="FB:FBgn0031759"/>
<dbReference type="CTD" id="33837"/>
<dbReference type="FlyBase" id="FBgn0031759">
    <property type="gene designation" value="Kdm5"/>
</dbReference>
<dbReference type="VEuPathDB" id="VectorBase:FBgn0031759"/>
<dbReference type="eggNOG" id="KOG1246">
    <property type="taxonomic scope" value="Eukaryota"/>
</dbReference>
<dbReference type="GeneTree" id="ENSGT00940000168915"/>
<dbReference type="HOGENOM" id="CLU_000991_3_0_1"/>
<dbReference type="InParanoid" id="Q9VMJ7"/>
<dbReference type="OMA" id="GFDQVCK"/>
<dbReference type="OrthoDB" id="1678912at2759"/>
<dbReference type="PhylomeDB" id="Q9VMJ7"/>
<dbReference type="BRENDA" id="1.14.11.67">
    <property type="organism ID" value="1994"/>
</dbReference>
<dbReference type="BRENDA" id="1.14.99.66">
    <property type="organism ID" value="1994"/>
</dbReference>
<dbReference type="Reactome" id="R-DME-8866911">
    <property type="pathway name" value="TFAP2 (AP-2) family regulates transcription of cell cycle factors"/>
</dbReference>
<dbReference type="SignaLink" id="Q9VMJ7"/>
<dbReference type="BioGRID-ORCS" id="33837">
    <property type="hits" value="2 hits in 3 CRISPR screens"/>
</dbReference>
<dbReference type="EvolutionaryTrace" id="Q9VMJ7"/>
<dbReference type="GenomeRNAi" id="33837"/>
<dbReference type="PRO" id="PR:Q9VMJ7"/>
<dbReference type="Proteomes" id="UP000000803">
    <property type="component" value="Chromosome 2L"/>
</dbReference>
<dbReference type="Bgee" id="FBgn0031759">
    <property type="expression patterns" value="Expressed in adult class III enteroendocrine cell in adult midgut (Drosophila) and 261 other cell types or tissues"/>
</dbReference>
<dbReference type="ExpressionAtlas" id="Q9VMJ7">
    <property type="expression patterns" value="baseline and differential"/>
</dbReference>
<dbReference type="GO" id="GO:0000785">
    <property type="term" value="C:chromatin"/>
    <property type="evidence" value="ECO:0000318"/>
    <property type="project" value="GO_Central"/>
</dbReference>
<dbReference type="GO" id="GO:0005634">
    <property type="term" value="C:nucleus"/>
    <property type="evidence" value="ECO:0000314"/>
    <property type="project" value="UniProtKB"/>
</dbReference>
<dbReference type="GO" id="GO:0070822">
    <property type="term" value="C:Sin3-type complex"/>
    <property type="evidence" value="ECO:0000314"/>
    <property type="project" value="FlyBase"/>
</dbReference>
<dbReference type="GO" id="GO:0003677">
    <property type="term" value="F:DNA binding"/>
    <property type="evidence" value="ECO:0007669"/>
    <property type="project" value="InterPro"/>
</dbReference>
<dbReference type="GO" id="GO:0004857">
    <property type="term" value="F:enzyme inhibitor activity"/>
    <property type="evidence" value="ECO:0000314"/>
    <property type="project" value="GO_Central"/>
</dbReference>
<dbReference type="GO" id="GO:0034647">
    <property type="term" value="F:histone H3K4me/H3K4me2/H3K4me3 demethylase activity"/>
    <property type="evidence" value="ECO:0000315"/>
    <property type="project" value="FlyBase"/>
</dbReference>
<dbReference type="GO" id="GO:0033749">
    <property type="term" value="F:histone H4R3 demethylase activity"/>
    <property type="evidence" value="ECO:0000315"/>
    <property type="project" value="FlyBase"/>
</dbReference>
<dbReference type="GO" id="GO:0140566">
    <property type="term" value="F:histone reader activity"/>
    <property type="evidence" value="ECO:0000315"/>
    <property type="project" value="FlyBase"/>
</dbReference>
<dbReference type="GO" id="GO:0008270">
    <property type="term" value="F:zinc ion binding"/>
    <property type="evidence" value="ECO:0007669"/>
    <property type="project" value="UniProtKB-KW"/>
</dbReference>
<dbReference type="GO" id="GO:0048149">
    <property type="term" value="P:behavioral response to ethanol"/>
    <property type="evidence" value="ECO:0000315"/>
    <property type="project" value="UniProtKB"/>
</dbReference>
<dbReference type="GO" id="GO:0006325">
    <property type="term" value="P:chromatin organization"/>
    <property type="evidence" value="ECO:0000315"/>
    <property type="project" value="FlyBase"/>
</dbReference>
<dbReference type="GO" id="GO:0006338">
    <property type="term" value="P:chromatin remodeling"/>
    <property type="evidence" value="ECO:0000318"/>
    <property type="project" value="GO_Central"/>
</dbReference>
<dbReference type="GO" id="GO:0048512">
    <property type="term" value="P:circadian behavior"/>
    <property type="evidence" value="ECO:0000315"/>
    <property type="project" value="UniProtKB"/>
</dbReference>
<dbReference type="GO" id="GO:0032922">
    <property type="term" value="P:circadian regulation of gene expression"/>
    <property type="evidence" value="ECO:0000315"/>
    <property type="project" value="UniProtKB"/>
</dbReference>
<dbReference type="GO" id="GO:0007526">
    <property type="term" value="P:larval somatic muscle development"/>
    <property type="evidence" value="ECO:0000315"/>
    <property type="project" value="FlyBase"/>
</dbReference>
<dbReference type="GO" id="GO:0045475">
    <property type="term" value="P:locomotor rhythm"/>
    <property type="evidence" value="ECO:0000315"/>
    <property type="project" value="FlyBase"/>
</dbReference>
<dbReference type="GO" id="GO:0036098">
    <property type="term" value="P:male germ-line stem cell population maintenance"/>
    <property type="evidence" value="ECO:0000315"/>
    <property type="project" value="FlyBase"/>
</dbReference>
<dbReference type="GO" id="GO:2000737">
    <property type="term" value="P:negative regulation of stem cell differentiation"/>
    <property type="evidence" value="ECO:0000315"/>
    <property type="project" value="FlyBase"/>
</dbReference>
<dbReference type="GO" id="GO:0030717">
    <property type="term" value="P:oocyte karyosome formation"/>
    <property type="evidence" value="ECO:0000315"/>
    <property type="project" value="FlyBase"/>
</dbReference>
<dbReference type="GO" id="GO:0045893">
    <property type="term" value="P:positive regulation of DNA-templated transcription"/>
    <property type="evidence" value="ECO:0000315"/>
    <property type="project" value="UniProtKB"/>
</dbReference>
<dbReference type="GO" id="GO:0045944">
    <property type="term" value="P:positive regulation of transcription by RNA polymerase II"/>
    <property type="evidence" value="ECO:0000315"/>
    <property type="project" value="FlyBase"/>
</dbReference>
<dbReference type="GO" id="GO:0006355">
    <property type="term" value="P:regulation of DNA-templated transcription"/>
    <property type="evidence" value="ECO:0000318"/>
    <property type="project" value="GO_Central"/>
</dbReference>
<dbReference type="GO" id="GO:0070193">
    <property type="term" value="P:synaptonemal complex organization"/>
    <property type="evidence" value="ECO:0000315"/>
    <property type="project" value="FlyBase"/>
</dbReference>
<dbReference type="CDD" id="cd16864">
    <property type="entry name" value="ARID_JARID"/>
    <property type="match status" value="1"/>
</dbReference>
<dbReference type="CDD" id="cd15605">
    <property type="entry name" value="PHD1_Lid_like"/>
    <property type="match status" value="1"/>
</dbReference>
<dbReference type="CDD" id="cd15606">
    <property type="entry name" value="PHD2_KDM5A"/>
    <property type="match status" value="1"/>
</dbReference>
<dbReference type="CDD" id="cd15610">
    <property type="entry name" value="PHD3_KDM5A_like"/>
    <property type="match status" value="1"/>
</dbReference>
<dbReference type="FunFam" id="3.30.40.10:FF:000023">
    <property type="entry name" value="Lysine (K)-specific demethylase 5A"/>
    <property type="match status" value="1"/>
</dbReference>
<dbReference type="FunFam" id="2.60.120.650:FF:000028">
    <property type="entry name" value="Lysine-specific demethylase lid"/>
    <property type="match status" value="1"/>
</dbReference>
<dbReference type="FunFam" id="1.10.150.60:FF:000001">
    <property type="entry name" value="Putative lysine-specific demethylase 5b"/>
    <property type="match status" value="1"/>
</dbReference>
<dbReference type="Gene3D" id="2.30.30.1150">
    <property type="match status" value="1"/>
</dbReference>
<dbReference type="Gene3D" id="1.10.150.60">
    <property type="entry name" value="ARID DNA-binding domain"/>
    <property type="match status" value="1"/>
</dbReference>
<dbReference type="Gene3D" id="2.60.120.650">
    <property type="entry name" value="Cupin"/>
    <property type="match status" value="1"/>
</dbReference>
<dbReference type="Gene3D" id="3.30.40.10">
    <property type="entry name" value="Zinc/RING finger domain, C3HC4 (zinc finger)"/>
    <property type="match status" value="2"/>
</dbReference>
<dbReference type="InterPro" id="IPR001606">
    <property type="entry name" value="ARID_dom"/>
</dbReference>
<dbReference type="InterPro" id="IPR036431">
    <property type="entry name" value="ARID_dom_sf"/>
</dbReference>
<dbReference type="InterPro" id="IPR003347">
    <property type="entry name" value="JmjC_dom"/>
</dbReference>
<dbReference type="InterPro" id="IPR003349">
    <property type="entry name" value="JmjN"/>
</dbReference>
<dbReference type="InterPro" id="IPR048615">
    <property type="entry name" value="KDM5_C-hel"/>
</dbReference>
<dbReference type="InterPro" id="IPR047970">
    <property type="entry name" value="KDM5A_PHD2"/>
</dbReference>
<dbReference type="InterPro" id="IPR013637">
    <property type="entry name" value="Lys_sp_deMease-like_dom"/>
</dbReference>
<dbReference type="InterPro" id="IPR019786">
    <property type="entry name" value="Zinc_finger_PHD-type_CS"/>
</dbReference>
<dbReference type="InterPro" id="IPR004198">
    <property type="entry name" value="Znf_C5HC2"/>
</dbReference>
<dbReference type="InterPro" id="IPR011011">
    <property type="entry name" value="Znf_FYVE_PHD"/>
</dbReference>
<dbReference type="InterPro" id="IPR001965">
    <property type="entry name" value="Znf_PHD"/>
</dbReference>
<dbReference type="InterPro" id="IPR019787">
    <property type="entry name" value="Znf_PHD-finger"/>
</dbReference>
<dbReference type="InterPro" id="IPR013083">
    <property type="entry name" value="Znf_RING/FYVE/PHD"/>
</dbReference>
<dbReference type="PANTHER" id="PTHR10694">
    <property type="entry name" value="LYSINE-SPECIFIC DEMETHYLASE"/>
    <property type="match status" value="1"/>
</dbReference>
<dbReference type="PANTHER" id="PTHR10694:SF33">
    <property type="entry name" value="LYSINE-SPECIFIC DEMETHYLASE 5"/>
    <property type="match status" value="1"/>
</dbReference>
<dbReference type="Pfam" id="PF01388">
    <property type="entry name" value="ARID"/>
    <property type="match status" value="1"/>
</dbReference>
<dbReference type="Pfam" id="PF02373">
    <property type="entry name" value="JmjC"/>
    <property type="match status" value="1"/>
</dbReference>
<dbReference type="Pfam" id="PF02375">
    <property type="entry name" value="JmjN"/>
    <property type="match status" value="1"/>
</dbReference>
<dbReference type="Pfam" id="PF21323">
    <property type="entry name" value="KDM5_C-hel"/>
    <property type="match status" value="1"/>
</dbReference>
<dbReference type="Pfam" id="PF00628">
    <property type="entry name" value="PHD"/>
    <property type="match status" value="3"/>
</dbReference>
<dbReference type="Pfam" id="PF08429">
    <property type="entry name" value="PLU-1"/>
    <property type="match status" value="1"/>
</dbReference>
<dbReference type="Pfam" id="PF02928">
    <property type="entry name" value="zf-C5HC2"/>
    <property type="match status" value="1"/>
</dbReference>
<dbReference type="SMART" id="SM01014">
    <property type="entry name" value="ARID"/>
    <property type="match status" value="1"/>
</dbReference>
<dbReference type="SMART" id="SM00501">
    <property type="entry name" value="BRIGHT"/>
    <property type="match status" value="1"/>
</dbReference>
<dbReference type="SMART" id="SM00558">
    <property type="entry name" value="JmjC"/>
    <property type="match status" value="1"/>
</dbReference>
<dbReference type="SMART" id="SM00545">
    <property type="entry name" value="JmjN"/>
    <property type="match status" value="1"/>
</dbReference>
<dbReference type="SMART" id="SM00249">
    <property type="entry name" value="PHD"/>
    <property type="match status" value="3"/>
</dbReference>
<dbReference type="SUPFAM" id="SSF46774">
    <property type="entry name" value="ARID-like"/>
    <property type="match status" value="1"/>
</dbReference>
<dbReference type="SUPFAM" id="SSF51197">
    <property type="entry name" value="Clavaminate synthase-like"/>
    <property type="match status" value="1"/>
</dbReference>
<dbReference type="SUPFAM" id="SSF57903">
    <property type="entry name" value="FYVE/PHD zinc finger"/>
    <property type="match status" value="3"/>
</dbReference>
<dbReference type="PROSITE" id="PS51011">
    <property type="entry name" value="ARID"/>
    <property type="match status" value="1"/>
</dbReference>
<dbReference type="PROSITE" id="PS51184">
    <property type="entry name" value="JMJC"/>
    <property type="match status" value="1"/>
</dbReference>
<dbReference type="PROSITE" id="PS51183">
    <property type="entry name" value="JMJN"/>
    <property type="match status" value="1"/>
</dbReference>
<dbReference type="PROSITE" id="PS01359">
    <property type="entry name" value="ZF_PHD_1"/>
    <property type="match status" value="2"/>
</dbReference>
<dbReference type="PROSITE" id="PS50016">
    <property type="entry name" value="ZF_PHD_2"/>
    <property type="match status" value="3"/>
</dbReference>
<keyword id="KW-0002">3D-structure</keyword>
<keyword id="KW-0090">Biological rhythms</keyword>
<keyword id="KW-0156">Chromatin regulator</keyword>
<keyword id="KW-0175">Coiled coil</keyword>
<keyword id="KW-0217">Developmental protein</keyword>
<keyword id="KW-0223">Dioxygenase</keyword>
<keyword id="KW-0408">Iron</keyword>
<keyword id="KW-0479">Metal-binding</keyword>
<keyword id="KW-0539">Nucleus</keyword>
<keyword id="KW-0560">Oxidoreductase</keyword>
<keyword id="KW-0597">Phosphoprotein</keyword>
<keyword id="KW-1185">Reference proteome</keyword>
<keyword id="KW-0677">Repeat</keyword>
<keyword id="KW-0804">Transcription</keyword>
<keyword id="KW-0805">Transcription regulation</keyword>
<keyword id="KW-0862">Zinc</keyword>
<keyword id="KW-0863">Zinc-finger</keyword>
<sequence length="1838" mass="203993">MSAKTEADNTTAANSGGGGVGSGTSSGGGASANGTATPARRLRTRNSTGNGTNSGSESVKKSNANDEPSTPVTPAGATGSHTHAPPGISPAVMERPMPSVPMNHASSSVSASKKYHNSCPHPTPTPAPTGHKKSVHTQPHSSNKFDQGKNEEFHFDTPPECPVFRPTTEEFKNPLAYISKIRSIAEKCGIAKILPPATWSPPFAVDVDKLRFVPRVQRLNELEAKTRVKLNFLDQIAKFWELQGSSLKIPMVERKALDLYTLHRIVQEEGGMEQTTKDRKWAKVANRMQYPSSKSVGATLKAHYERILHPFEVYTSGKVLGPTPTSSGSGSTPVKLEDGGGTDYKAHEIPTRQQIAPPNETNTRRSKRFGNSNASCGLSGVTPTTKPSAGVFVKTETKEEFKRDLLSSFNAVNSGGSPLATGTTANTRGASQKKGGEPPALIVDPLMKYICHICNRGDVEESMLLCDGCDDSYHTFCLLPPLTSIPKGEWLCPRCVVEEVSKPQEAFGFEQAEREYTLQQFGQMADQFKQEYFRKPVHLVPTEMVEREFWRIVSSIDEDVTVEYGADLHTMDHGSGFPTKSSLYLLPGDQEYAESSWNLNNLPLLEDSILGHINADISGMNAPWMYVGMCFAAFCWHNEDHWSYSINYLHWGEPKTWYGVPGSCAEQFEETMKQAAPELFSSQPDLLHQLVTIMNPNILMNNRVPVFRTDQHAGEFVITFPRAYHAGFNQGYNFAEAVNFAPADWLKMGRECVNHYSMLRRFCVFSHDELVCKMALEPAKLTFGIATACYIDMAEMVDTEKKLRKSLLEWGVTRAERRAFELVNDDERHCQECNTTCFLSAVACECNDKLIVCLRHYTVLCGCAPEKHTLIYRYTLDEMPLMLQKLKVKAHSFERWLSRCRDIVDAHTPTSVTLQELQELCKEAETKKFPSSLLIDRLNAAAVEAEKCVTVIQQLGINKVRTRSDHNQEAAQYKLTMEELELFVQEIDNLCCIIDEGASVRELLVLGKQFVERSESQLQLSLESLEESELETLINEGSSLRIELQQLDLLQKRLKQCKWYKRSQGLRETSSKLTYQDVKNLLHIAAADLDPTDPYVDKEMRKLQQIGADIEAWESQAAKYFRRLTQQHELGEIEQFLKSASDINGQVPSHGLLKDALRKAREWLRAVEQLQQNNHVTYCHTLEAMIERGLNIPIQLEELSRMQGHLNSAHQWKDNTACAFLKKGTFYTLLEVLMPRSDAINIDSDLKPRFQDDFLKEKNPAEIVASFKHAEEQELLDMRELRRQNMNKNPMRDMFCLCKSEFRNLMFNCQLCRDWFHEDCVPPPSATNQNGIVNGGSGPGTNRPKWLCPSCVRSKRPRLETILPLLVQLQQLPIRLPEDEALRCLAERAMNWQDRARKALSSPDVSAAQEAIMAQQQQKRRSEGGAGVGNISSPRKPRRRGSLTKEASGSTESDADDDDDEDECRLRIVEDNFSNDEDEPRTAPATSTVNSDLLKLLSDSEIENLLDLMMEGDLLEVSLDETQELWRILETMPPTLLQAEAMERVVQYMQRQRQQHTNPLPTSGAEDSNDSLMVQNSPNSNSNSGGATGSASNSGRNKKRRSNDTGGNSAVPRKKQSTPKQTPGKKGSAAAARKSDAKASPAASTTPGADADAENKQANGGNTNSSTGSGGGNSATTTPTPGSTHKKRKRTSTTATNNNNNNNNNSTNNSNSSTNLNSNTTSGQGAATGGNNATGGQKKHAQRSQQAAQEDDEEECRAENCHKPTGREVDWVQCDGGCNEWFHMYCVGLNRSQIKPDDDYICIRCTKTVAIGTQGSGHSMSVASTTTPGKQRAVQSAR</sequence>
<organism>
    <name type="scientific">Drosophila melanogaster</name>
    <name type="common">Fruit fly</name>
    <dbReference type="NCBI Taxonomy" id="7227"/>
    <lineage>
        <taxon>Eukaryota</taxon>
        <taxon>Metazoa</taxon>
        <taxon>Ecdysozoa</taxon>
        <taxon>Arthropoda</taxon>
        <taxon>Hexapoda</taxon>
        <taxon>Insecta</taxon>
        <taxon>Pterygota</taxon>
        <taxon>Neoptera</taxon>
        <taxon>Endopterygota</taxon>
        <taxon>Diptera</taxon>
        <taxon>Brachycera</taxon>
        <taxon>Muscomorpha</taxon>
        <taxon>Ephydroidea</taxon>
        <taxon>Drosophilidae</taxon>
        <taxon>Drosophila</taxon>
        <taxon>Sophophora</taxon>
    </lineage>
</organism>
<gene>
    <name evidence="19" type="primary">Kdm5</name>
    <name evidence="16" type="synonym">lid</name>
    <name evidence="19" type="ORF">CG9088</name>
</gene>
<proteinExistence type="evidence at protein level"/>
<evidence type="ECO:0000250" key="1"/>
<evidence type="ECO:0000255" key="2"/>
<evidence type="ECO:0000255" key="3">
    <source>
        <dbReference type="PROSITE-ProRule" id="PRU00146"/>
    </source>
</evidence>
<evidence type="ECO:0000255" key="4">
    <source>
        <dbReference type="PROSITE-ProRule" id="PRU00355"/>
    </source>
</evidence>
<evidence type="ECO:0000255" key="5">
    <source>
        <dbReference type="PROSITE-ProRule" id="PRU00537"/>
    </source>
</evidence>
<evidence type="ECO:0000255" key="6">
    <source>
        <dbReference type="PROSITE-ProRule" id="PRU00538"/>
    </source>
</evidence>
<evidence type="ECO:0000256" key="7">
    <source>
        <dbReference type="SAM" id="MobiDB-lite"/>
    </source>
</evidence>
<evidence type="ECO:0000269" key="8">
    <source>
    </source>
</evidence>
<evidence type="ECO:0000269" key="9">
    <source>
    </source>
</evidence>
<evidence type="ECO:0000269" key="10">
    <source>
    </source>
</evidence>
<evidence type="ECO:0000269" key="11">
    <source>
    </source>
</evidence>
<evidence type="ECO:0000269" key="12">
    <source>
    </source>
</evidence>
<evidence type="ECO:0000269" key="13">
    <source>
    </source>
</evidence>
<evidence type="ECO:0000269" key="14">
    <source>
    </source>
</evidence>
<evidence type="ECO:0000269" key="15">
    <source>
    </source>
</evidence>
<evidence type="ECO:0000303" key="16">
    <source>
    </source>
</evidence>
<evidence type="ECO:0000303" key="17">
    <source>
    </source>
</evidence>
<evidence type="ECO:0000305" key="18"/>
<evidence type="ECO:0000312" key="19">
    <source>
        <dbReference type="FlyBase" id="FBgn0031759"/>
    </source>
</evidence>
<evidence type="ECO:0007829" key="20">
    <source>
        <dbReference type="PDB" id="2LM1"/>
    </source>
</evidence>
<evidence type="ECO:0007829" key="21">
    <source>
        <dbReference type="PDB" id="2MIQ"/>
    </source>
</evidence>
<feature type="chain" id="PRO_0000292421" description="Lysine-specific demethylase 5">
    <location>
        <begin position="1"/>
        <end position="1838"/>
    </location>
</feature>
<feature type="domain" description="JmjN" evidence="5">
    <location>
        <begin position="161"/>
        <end position="202"/>
    </location>
</feature>
<feature type="domain" description="ARID" evidence="4">
    <location>
        <begin position="226"/>
        <end position="316"/>
    </location>
</feature>
<feature type="domain" description="JmjC" evidence="6">
    <location>
        <begin position="591"/>
        <end position="757"/>
    </location>
</feature>
<feature type="zinc finger region" description="PHD-type 1" evidence="3">
    <location>
        <begin position="448"/>
        <end position="498"/>
    </location>
</feature>
<feature type="zinc finger region" description="PHD-type 2" evidence="3">
    <location>
        <begin position="1293"/>
        <end position="1354"/>
    </location>
</feature>
<feature type="zinc finger region" description="PHD-type 3" evidence="3">
    <location>
        <begin position="1753"/>
        <end position="1808"/>
    </location>
</feature>
<feature type="region of interest" description="Disordered" evidence="7">
    <location>
        <begin position="1"/>
        <end position="150"/>
    </location>
</feature>
<feature type="region of interest" description="Disordered" evidence="7">
    <location>
        <begin position="321"/>
        <end position="380"/>
    </location>
</feature>
<feature type="region of interest" description="Disordered" evidence="7">
    <location>
        <begin position="416"/>
        <end position="437"/>
    </location>
</feature>
<feature type="region of interest" description="Disordered" evidence="7">
    <location>
        <begin position="1401"/>
        <end position="1462"/>
    </location>
</feature>
<feature type="region of interest" description="Disordered" evidence="7">
    <location>
        <begin position="1548"/>
        <end position="1751"/>
    </location>
</feature>
<feature type="region of interest" description="Disordered" evidence="7">
    <location>
        <begin position="1814"/>
        <end position="1838"/>
    </location>
</feature>
<feature type="coiled-coil region" evidence="2">
    <location>
        <begin position="960"/>
        <end position="1049"/>
    </location>
</feature>
<feature type="compositionally biased region" description="Gly residues" evidence="7">
    <location>
        <begin position="15"/>
        <end position="31"/>
    </location>
</feature>
<feature type="compositionally biased region" description="Low complexity" evidence="7">
    <location>
        <begin position="45"/>
        <end position="56"/>
    </location>
</feature>
<feature type="compositionally biased region" description="Polar residues" evidence="7">
    <location>
        <begin position="136"/>
        <end position="145"/>
    </location>
</feature>
<feature type="compositionally biased region" description="Low complexity" evidence="7">
    <location>
        <begin position="321"/>
        <end position="333"/>
    </location>
</feature>
<feature type="compositionally biased region" description="Polar residues" evidence="7">
    <location>
        <begin position="351"/>
        <end position="361"/>
    </location>
</feature>
<feature type="compositionally biased region" description="Polar residues" evidence="7">
    <location>
        <begin position="369"/>
        <end position="380"/>
    </location>
</feature>
<feature type="compositionally biased region" description="Polar residues" evidence="7">
    <location>
        <begin position="416"/>
        <end position="430"/>
    </location>
</feature>
<feature type="compositionally biased region" description="Low complexity" evidence="7">
    <location>
        <begin position="1407"/>
        <end position="1417"/>
    </location>
</feature>
<feature type="compositionally biased region" description="Acidic residues" evidence="7">
    <location>
        <begin position="1453"/>
        <end position="1462"/>
    </location>
</feature>
<feature type="compositionally biased region" description="Low complexity" evidence="7">
    <location>
        <begin position="1576"/>
        <end position="1595"/>
    </location>
</feature>
<feature type="compositionally biased region" description="Low complexity" evidence="7">
    <location>
        <begin position="1624"/>
        <end position="1650"/>
    </location>
</feature>
<feature type="compositionally biased region" description="Low complexity" evidence="7">
    <location>
        <begin position="1658"/>
        <end position="1667"/>
    </location>
</feature>
<feature type="compositionally biased region" description="Low complexity" evidence="7">
    <location>
        <begin position="1674"/>
        <end position="1683"/>
    </location>
</feature>
<feature type="compositionally biased region" description="Low complexity" evidence="7">
    <location>
        <begin position="1692"/>
        <end position="1736"/>
    </location>
</feature>
<feature type="binding site" evidence="6">
    <location>
        <position position="637"/>
    </location>
    <ligand>
        <name>Fe cation</name>
        <dbReference type="ChEBI" id="CHEBI:24875"/>
        <note>catalytic</note>
    </ligand>
</feature>
<feature type="binding site" evidence="6">
    <location>
        <position position="640"/>
    </location>
    <ligand>
        <name>Fe cation</name>
        <dbReference type="ChEBI" id="CHEBI:24875"/>
        <note>catalytic</note>
    </ligand>
</feature>
<feature type="binding site" evidence="6">
    <location>
        <position position="725"/>
    </location>
    <ligand>
        <name>Fe cation</name>
        <dbReference type="ChEBI" id="CHEBI:24875"/>
        <note>catalytic</note>
    </ligand>
</feature>
<feature type="modified residue" description="Phosphothreonine" evidence="13">
    <location>
        <position position="323"/>
    </location>
</feature>
<feature type="modified residue" description="Phosphoserine" evidence="13">
    <location>
        <position position="1422"/>
    </location>
</feature>
<feature type="modified residue" description="Phosphoserine" evidence="13">
    <location>
        <position position="1433"/>
    </location>
</feature>
<feature type="modified residue" description="Phosphoserine" evidence="12">
    <location>
        <position position="1474"/>
    </location>
</feature>
<feature type="modified residue" description="Phosphoserine" evidence="13">
    <location>
        <position position="1635"/>
    </location>
</feature>
<feature type="modified residue" description="Phosphoserine" evidence="13">
    <location>
        <position position="1640"/>
    </location>
</feature>
<feature type="mutagenesis site" description="Abolishes enzymatic activity; when associated with A-536." evidence="9">
    <original>H</original>
    <variation>A</variation>
    <location>
        <position position="637"/>
    </location>
</feature>
<feature type="mutagenesis site" description="Abolishes enzymatic activity; when associated with A-534." evidence="9">
    <original>E</original>
    <variation>A</variation>
    <location>
        <position position="639"/>
    </location>
</feature>
<feature type="strand" evidence="20">
    <location>
        <begin position="217"/>
        <end position="219"/>
    </location>
</feature>
<feature type="helix" evidence="20">
    <location>
        <begin position="227"/>
        <end position="240"/>
    </location>
</feature>
<feature type="turn" evidence="20">
    <location>
        <begin position="241"/>
        <end position="243"/>
    </location>
</feature>
<feature type="turn" evidence="20">
    <location>
        <begin position="252"/>
        <end position="254"/>
    </location>
</feature>
<feature type="helix" evidence="20">
    <location>
        <begin position="259"/>
        <end position="269"/>
    </location>
</feature>
<feature type="helix" evidence="20">
    <location>
        <begin position="272"/>
        <end position="278"/>
    </location>
</feature>
<feature type="helix" evidence="20">
    <location>
        <begin position="281"/>
        <end position="287"/>
    </location>
</feature>
<feature type="helix" evidence="20">
    <location>
        <begin position="294"/>
        <end position="315"/>
    </location>
</feature>
<feature type="turn" evidence="21">
    <location>
        <begin position="433"/>
        <end position="436"/>
    </location>
</feature>
<feature type="strand" evidence="21">
    <location>
        <begin position="443"/>
        <end position="446"/>
    </location>
</feature>
<feature type="turn" evidence="21">
    <location>
        <begin position="452"/>
        <end position="455"/>
    </location>
</feature>
<feature type="helix" evidence="21">
    <location>
        <begin position="460"/>
        <end position="462"/>
    </location>
</feature>
<feature type="strand" evidence="21">
    <location>
        <begin position="463"/>
        <end position="465"/>
    </location>
</feature>
<feature type="strand" evidence="21">
    <location>
        <begin position="472"/>
        <end position="474"/>
    </location>
</feature>
<feature type="turn" evidence="21">
    <location>
        <begin position="475"/>
        <end position="477"/>
    </location>
</feature>
<feature type="strand" evidence="21">
    <location>
        <begin position="478"/>
        <end position="480"/>
    </location>
</feature>
<feature type="helix" evidence="21">
    <location>
        <begin position="493"/>
        <end position="496"/>
    </location>
</feature>
<reference key="1">
    <citation type="journal article" date="2000" name="Science">
        <title>The genome sequence of Drosophila melanogaster.</title>
        <authorList>
            <person name="Adams M.D."/>
            <person name="Celniker S.E."/>
            <person name="Holt R.A."/>
            <person name="Evans C.A."/>
            <person name="Gocayne J.D."/>
            <person name="Amanatides P.G."/>
            <person name="Scherer S.E."/>
            <person name="Li P.W."/>
            <person name="Hoskins R.A."/>
            <person name="Galle R.F."/>
            <person name="George R.A."/>
            <person name="Lewis S.E."/>
            <person name="Richards S."/>
            <person name="Ashburner M."/>
            <person name="Henderson S.N."/>
            <person name="Sutton G.G."/>
            <person name="Wortman J.R."/>
            <person name="Yandell M.D."/>
            <person name="Zhang Q."/>
            <person name="Chen L.X."/>
            <person name="Brandon R.C."/>
            <person name="Rogers Y.-H.C."/>
            <person name="Blazej R.G."/>
            <person name="Champe M."/>
            <person name="Pfeiffer B.D."/>
            <person name="Wan K.H."/>
            <person name="Doyle C."/>
            <person name="Baxter E.G."/>
            <person name="Helt G."/>
            <person name="Nelson C.R."/>
            <person name="Miklos G.L.G."/>
            <person name="Abril J.F."/>
            <person name="Agbayani A."/>
            <person name="An H.-J."/>
            <person name="Andrews-Pfannkoch C."/>
            <person name="Baldwin D."/>
            <person name="Ballew R.M."/>
            <person name="Basu A."/>
            <person name="Baxendale J."/>
            <person name="Bayraktaroglu L."/>
            <person name="Beasley E.M."/>
            <person name="Beeson K.Y."/>
            <person name="Benos P.V."/>
            <person name="Berman B.P."/>
            <person name="Bhandari D."/>
            <person name="Bolshakov S."/>
            <person name="Borkova D."/>
            <person name="Botchan M.R."/>
            <person name="Bouck J."/>
            <person name="Brokstein P."/>
            <person name="Brottier P."/>
            <person name="Burtis K.C."/>
            <person name="Busam D.A."/>
            <person name="Butler H."/>
            <person name="Cadieu E."/>
            <person name="Center A."/>
            <person name="Chandra I."/>
            <person name="Cherry J.M."/>
            <person name="Cawley S."/>
            <person name="Dahlke C."/>
            <person name="Davenport L.B."/>
            <person name="Davies P."/>
            <person name="de Pablos B."/>
            <person name="Delcher A."/>
            <person name="Deng Z."/>
            <person name="Mays A.D."/>
            <person name="Dew I."/>
            <person name="Dietz S.M."/>
            <person name="Dodson K."/>
            <person name="Doup L.E."/>
            <person name="Downes M."/>
            <person name="Dugan-Rocha S."/>
            <person name="Dunkov B.C."/>
            <person name="Dunn P."/>
            <person name="Durbin K.J."/>
            <person name="Evangelista C.C."/>
            <person name="Ferraz C."/>
            <person name="Ferriera S."/>
            <person name="Fleischmann W."/>
            <person name="Fosler C."/>
            <person name="Gabrielian A.E."/>
            <person name="Garg N.S."/>
            <person name="Gelbart W.M."/>
            <person name="Glasser K."/>
            <person name="Glodek A."/>
            <person name="Gong F."/>
            <person name="Gorrell J.H."/>
            <person name="Gu Z."/>
            <person name="Guan P."/>
            <person name="Harris M."/>
            <person name="Harris N.L."/>
            <person name="Harvey D.A."/>
            <person name="Heiman T.J."/>
            <person name="Hernandez J.R."/>
            <person name="Houck J."/>
            <person name="Hostin D."/>
            <person name="Houston K.A."/>
            <person name="Howland T.J."/>
            <person name="Wei M.-H."/>
            <person name="Ibegwam C."/>
            <person name="Jalali M."/>
            <person name="Kalush F."/>
            <person name="Karpen G.H."/>
            <person name="Ke Z."/>
            <person name="Kennison J.A."/>
            <person name="Ketchum K.A."/>
            <person name="Kimmel B.E."/>
            <person name="Kodira C.D."/>
            <person name="Kraft C.L."/>
            <person name="Kravitz S."/>
            <person name="Kulp D."/>
            <person name="Lai Z."/>
            <person name="Lasko P."/>
            <person name="Lei Y."/>
            <person name="Levitsky A.A."/>
            <person name="Li J.H."/>
            <person name="Li Z."/>
            <person name="Liang Y."/>
            <person name="Lin X."/>
            <person name="Liu X."/>
            <person name="Mattei B."/>
            <person name="McIntosh T.C."/>
            <person name="McLeod M.P."/>
            <person name="McPherson D."/>
            <person name="Merkulov G."/>
            <person name="Milshina N.V."/>
            <person name="Mobarry C."/>
            <person name="Morris J."/>
            <person name="Moshrefi A."/>
            <person name="Mount S.M."/>
            <person name="Moy M."/>
            <person name="Murphy B."/>
            <person name="Murphy L."/>
            <person name="Muzny D.M."/>
            <person name="Nelson D.L."/>
            <person name="Nelson D.R."/>
            <person name="Nelson K.A."/>
            <person name="Nixon K."/>
            <person name="Nusskern D.R."/>
            <person name="Pacleb J.M."/>
            <person name="Palazzolo M."/>
            <person name="Pittman G.S."/>
            <person name="Pan S."/>
            <person name="Pollard J."/>
            <person name="Puri V."/>
            <person name="Reese M.G."/>
            <person name="Reinert K."/>
            <person name="Remington K."/>
            <person name="Saunders R.D.C."/>
            <person name="Scheeler F."/>
            <person name="Shen H."/>
            <person name="Shue B.C."/>
            <person name="Siden-Kiamos I."/>
            <person name="Simpson M."/>
            <person name="Skupski M.P."/>
            <person name="Smith T.J."/>
            <person name="Spier E."/>
            <person name="Spradling A.C."/>
            <person name="Stapleton M."/>
            <person name="Strong R."/>
            <person name="Sun E."/>
            <person name="Svirskas R."/>
            <person name="Tector C."/>
            <person name="Turner R."/>
            <person name="Venter E."/>
            <person name="Wang A.H."/>
            <person name="Wang X."/>
            <person name="Wang Z.-Y."/>
            <person name="Wassarman D.A."/>
            <person name="Weinstock G.M."/>
            <person name="Weissenbach J."/>
            <person name="Williams S.M."/>
            <person name="Woodage T."/>
            <person name="Worley K.C."/>
            <person name="Wu D."/>
            <person name="Yang S."/>
            <person name="Yao Q.A."/>
            <person name="Ye J."/>
            <person name="Yeh R.-F."/>
            <person name="Zaveri J.S."/>
            <person name="Zhan M."/>
            <person name="Zhang G."/>
            <person name="Zhao Q."/>
            <person name="Zheng L."/>
            <person name="Zheng X.H."/>
            <person name="Zhong F.N."/>
            <person name="Zhong W."/>
            <person name="Zhou X."/>
            <person name="Zhu S.C."/>
            <person name="Zhu X."/>
            <person name="Smith H.O."/>
            <person name="Gibbs R.A."/>
            <person name="Myers E.W."/>
            <person name="Rubin G.M."/>
            <person name="Venter J.C."/>
        </authorList>
    </citation>
    <scope>NUCLEOTIDE SEQUENCE [LARGE SCALE GENOMIC DNA]</scope>
    <source>
        <strain>Berkeley</strain>
    </source>
</reference>
<reference key="2">
    <citation type="journal article" date="2002" name="Genome Biol.">
        <title>Annotation of the Drosophila melanogaster euchromatic genome: a systematic review.</title>
        <authorList>
            <person name="Misra S."/>
            <person name="Crosby M.A."/>
            <person name="Mungall C.J."/>
            <person name="Matthews B.B."/>
            <person name="Campbell K.S."/>
            <person name="Hradecky P."/>
            <person name="Huang Y."/>
            <person name="Kaminker J.S."/>
            <person name="Millburn G.H."/>
            <person name="Prochnik S.E."/>
            <person name="Smith C.D."/>
            <person name="Tupy J.L."/>
            <person name="Whitfield E.J."/>
            <person name="Bayraktaroglu L."/>
            <person name="Berman B.P."/>
            <person name="Bettencourt B.R."/>
            <person name="Celniker S.E."/>
            <person name="de Grey A.D.N.J."/>
            <person name="Drysdale R.A."/>
            <person name="Harris N.L."/>
            <person name="Richter J."/>
            <person name="Russo S."/>
            <person name="Schroeder A.J."/>
            <person name="Shu S.Q."/>
            <person name="Stapleton M."/>
            <person name="Yamada C."/>
            <person name="Ashburner M."/>
            <person name="Gelbart W.M."/>
            <person name="Rubin G.M."/>
            <person name="Lewis S.E."/>
        </authorList>
    </citation>
    <scope>GENOME REANNOTATION</scope>
    <source>
        <strain>Berkeley</strain>
    </source>
</reference>
<reference key="3">
    <citation type="journal article" date="2002" name="Genome Biol.">
        <title>A Drosophila full-length cDNA resource.</title>
        <authorList>
            <person name="Stapleton M."/>
            <person name="Carlson J.W."/>
            <person name="Brokstein P."/>
            <person name="Yu C."/>
            <person name="Champe M."/>
            <person name="George R.A."/>
            <person name="Guarin H."/>
            <person name="Kronmiller B."/>
            <person name="Pacleb J.M."/>
            <person name="Park S."/>
            <person name="Wan K.H."/>
            <person name="Rubin G.M."/>
            <person name="Celniker S.E."/>
        </authorList>
    </citation>
    <scope>NUCLEOTIDE SEQUENCE [LARGE SCALE MRNA]</scope>
    <source>
        <strain>Berkeley</strain>
        <tissue>Embryo</tissue>
    </source>
</reference>
<reference key="4">
    <citation type="journal article" date="2000" name="Genetics">
        <title>A screen for new trithorax group genes identified little imaginal discs, the Drosophila melanogaster homologue of human retinoblastoma binding protein 2.</title>
        <authorList>
            <person name="Gildea J.J."/>
            <person name="Lopez R."/>
            <person name="Shearn A."/>
        </authorList>
    </citation>
    <scope>IDENTIFICATION</scope>
    <scope>FUNCTION</scope>
</reference>
<reference key="5">
    <citation type="journal article" date="2007" name="Genes Dev.">
        <title>The Trithorax group protein Lid is a trimethyl histone H3K4 demethylase required for dMyc-induced cell growth.</title>
        <authorList>
            <person name="Secombe J."/>
            <person name="Li L."/>
            <person name="Carlos L."/>
            <person name="Eisenman R.N."/>
        </authorList>
    </citation>
    <scope>FUNCTION</scope>
    <scope>CATALYTIC ACTIVITY</scope>
    <scope>ACTIVITY REGULATION</scope>
    <scope>INTERACTION WITH MYC</scope>
    <scope>IDENTIFICATION IN COMPLEX WITH MYC AND ASH2</scope>
    <scope>SUBCELLULAR LOCATION</scope>
    <scope>MUTAGENESIS OF HIS-637 AND GLU-639</scope>
</reference>
<reference key="6">
    <citation type="journal article" date="2007" name="Mol. Biosyst.">
        <title>An integrated chemical, mass spectrometric and computational strategy for (quantitative) phosphoproteomics: application to Drosophila melanogaster Kc167 cells.</title>
        <authorList>
            <person name="Bodenmiller B."/>
            <person name="Mueller L.N."/>
            <person name="Pedrioli P.G.A."/>
            <person name="Pflieger D."/>
            <person name="Juenger M.A."/>
            <person name="Eng J.K."/>
            <person name="Aebersold R."/>
            <person name="Tao W.A."/>
        </authorList>
    </citation>
    <scope>PHOSPHORYLATION [LARGE SCALE ANALYSIS] AT SER-1474</scope>
    <scope>IDENTIFICATION BY MASS SPECTROMETRY</scope>
</reference>
<reference key="7">
    <citation type="journal article" date="2007" name="Nat. Struct. Mol. Biol.">
        <title>The trithorax-group protein Lid is a histone H3 trimethyl-Lys4 demethylase.</title>
        <authorList>
            <person name="Lee N."/>
            <person name="Zhang J."/>
            <person name="Klose R.J."/>
            <person name="Erdjument-Bromage H."/>
            <person name="Tempst P."/>
            <person name="Jones R.S."/>
            <person name="Zhang Y."/>
        </authorList>
    </citation>
    <scope>FUNCTION</scope>
    <scope>CATALYTIC ACTIVITY</scope>
</reference>
<reference key="8">
    <citation type="journal article" date="2007" name="Nat. Struct. Mol. Biol.">
        <title>The trithorax-group gene in Drosophila little imaginal discs encodes a trimethylated histone H3 Lys4 demethylase.</title>
        <authorList>
            <person name="Eissenberg J.C."/>
            <person name="Lee M.G."/>
            <person name="Schneider J."/>
            <person name="Ilvarsonn A."/>
            <person name="Shiekhattar R."/>
            <person name="Shilatifard A."/>
        </authorList>
    </citation>
    <scope>FUNCTION</scope>
    <scope>CATALYTIC ACTIVITY</scope>
</reference>
<reference key="9">
    <citation type="journal article" date="2008" name="J. Proteome Res.">
        <title>Phosphoproteome analysis of Drosophila melanogaster embryos.</title>
        <authorList>
            <person name="Zhai B."/>
            <person name="Villen J."/>
            <person name="Beausoleil S.A."/>
            <person name="Mintseris J."/>
            <person name="Gygi S.P."/>
        </authorList>
    </citation>
    <scope>PHOSPHORYLATION [LARGE SCALE ANALYSIS] AT THR-323; SER-1422; SER-1433; SER-1635 AND SER-1640</scope>
    <scope>IDENTIFICATION BY MASS SPECTROMETRY</scope>
    <source>
        <tissue>Embryo</tissue>
    </source>
</reference>
<reference key="10">
    <citation type="journal article" date="2011" name="Science">
        <title>Histone lysine demethylase JARID1a activates CLOCK-BMAL1 and influences the circadian clock.</title>
        <authorList>
            <person name="DiTacchio L."/>
            <person name="Le H.D."/>
            <person name="Vollmers C."/>
            <person name="Hatori M."/>
            <person name="Witcher M."/>
            <person name="Secombe J."/>
            <person name="Panda S."/>
        </authorList>
    </citation>
    <scope>FUNCTION</scope>
</reference>
<reference key="11">
    <citation type="journal article" date="2022" name="Genet. Med.">
        <title>De Novo ZMYND8 variants result in an autosomal dominant neurodevelopmental disorder with cardiac malformations.</title>
        <authorList>
            <person name="Dias K.R."/>
            <person name="Carlston C.M."/>
            <person name="Blok L.E.R."/>
            <person name="De Hayr L."/>
            <person name="Nawaz U."/>
            <person name="Evans C.A."/>
            <person name="Bayrak-Toydemir P."/>
            <person name="Htun S."/>
            <person name="Zhu Y."/>
            <person name="Ma A."/>
            <person name="Lynch S.A."/>
            <person name="Moorwood C."/>
            <person name="Stals K."/>
            <person name="Ellard S."/>
            <person name="Bainbridge M.N."/>
            <person name="Friedman J."/>
            <person name="Pappas J.G."/>
            <person name="Rabin R."/>
            <person name="Nowak C.B."/>
            <person name="Douglas J."/>
            <person name="Wilson T.E."/>
            <person name="Guillen Sacoto M.J."/>
            <person name="Mullegama S.V."/>
            <person name="Palculict T.B."/>
            <person name="Kirk E.P."/>
            <person name="Pinner J.R."/>
            <person name="Edwards M."/>
            <person name="Montanari F."/>
            <person name="Graziano C."/>
            <person name="Pippucci T."/>
            <person name="Dingmann B."/>
            <person name="Glass I."/>
            <person name="Mefford H.C."/>
            <person name="Shimoji T."/>
            <person name="Suzuki T."/>
            <person name="Yamakawa K."/>
            <person name="Streff H."/>
            <person name="Schaaf C.P."/>
            <person name="Slavotinek A.M."/>
            <person name="Voineagu I."/>
            <person name="Carey J.C."/>
            <person name="Buckley M.F."/>
            <person name="Schenck A."/>
            <person name="Harvey R.J."/>
            <person name="Roscioli T."/>
        </authorList>
    </citation>
    <scope>DISRUPTION PHENOTYPE</scope>
</reference>
<protein>
    <recommendedName>
        <fullName evidence="18">Lysine-specific demethylase 5</fullName>
        <ecNumber evidence="9 10 11">1.14.11.67</ecNumber>
    </recommendedName>
    <alternativeName>
        <fullName evidence="18">Histone demethylase lid</fullName>
    </alternativeName>
    <alternativeName>
        <fullName>Jumonji/ARID domain-containing protein lid</fullName>
    </alternativeName>
    <alternativeName>
        <fullName evidence="18">Protein little imaginal disks</fullName>
        <shortName evidence="17">lid</shortName>
    </alternativeName>
    <alternativeName>
        <fullName evidence="18">Retinoblastoma-binding protein 2 homolog</fullName>
    </alternativeName>
    <alternativeName>
        <fullName evidence="18">[histone H3]-trimethyl-L-lysine(4) demethylase Kdm5</fullName>
    </alternativeName>
</protein>
<accession>Q9VMJ7</accession>
<name>KDM5_DROME</name>
<comment type="function">
    <text evidence="8 9 10 11 14">Histone demethylase that specifically demethylates 'Lys-4' of histone H3, thereby playing a central role in histone code. Does not demethylate histone H3 'Lys-9', H3 'Lys-27', H3 'Lys-36', H3 'Lys-79' or H4 'Lys-20'. Specifically demethylates trimethylated H3 'Lys-4'. Required for the correct regulation of homeotic genes during development. Plays a role in the regulation of the circadian rhythm and in maintaining the normal periodicity of the circadian clock. Regulates the expression of clock-controlled genes including tim, per and cry.</text>
</comment>
<comment type="catalytic activity">
    <reaction evidence="9 10 11">
        <text>N(6),N(6),N(6)-trimethyl-L-lysyl(4)-[histone H3] + 3 2-oxoglutarate + 3 O2 = L-lysyl(4)-[histone H3] + 3 formaldehyde + 3 succinate + 3 CO2</text>
        <dbReference type="Rhea" id="RHEA:60208"/>
        <dbReference type="Rhea" id="RHEA-COMP:15537"/>
        <dbReference type="Rhea" id="RHEA-COMP:15547"/>
        <dbReference type="ChEBI" id="CHEBI:15379"/>
        <dbReference type="ChEBI" id="CHEBI:16526"/>
        <dbReference type="ChEBI" id="CHEBI:16810"/>
        <dbReference type="ChEBI" id="CHEBI:16842"/>
        <dbReference type="ChEBI" id="CHEBI:29969"/>
        <dbReference type="ChEBI" id="CHEBI:30031"/>
        <dbReference type="ChEBI" id="CHEBI:61961"/>
        <dbReference type="EC" id="1.14.11.67"/>
    </reaction>
</comment>
<comment type="cofactor">
    <cofactor evidence="1">
        <name>Fe(2+)</name>
        <dbReference type="ChEBI" id="CHEBI:29033"/>
    </cofactor>
    <text evidence="1">Binds 1 Fe(2+) ion per subunit.</text>
</comment>
<comment type="activity regulation">
    <text evidence="9">Inhibited by Myc.</text>
</comment>
<comment type="subunit">
    <text evidence="9">Interacts with Myc. Part of a complex containing Lid, Myc and Ash2.</text>
</comment>
<comment type="subcellular location">
    <subcellularLocation>
        <location evidence="4 5 9">Nucleus</location>
    </subcellularLocation>
</comment>
<comment type="disruption phenotype">
    <text evidence="15">RNAi-mediated knockdown impairs habituation learning.</text>
</comment>
<comment type="similarity">
    <text evidence="18">Belongs to the JARID1 histone demethylase family.</text>
</comment>